<feature type="chain" id="PRO_1000215935" description="Chromosome partition protein MukB">
    <location>
        <begin position="1"/>
        <end position="1486"/>
    </location>
</feature>
<feature type="region of interest" description="Flexible hinge" evidence="1">
    <location>
        <begin position="666"/>
        <end position="783"/>
    </location>
</feature>
<feature type="coiled-coil region" evidence="1">
    <location>
        <begin position="326"/>
        <end position="418"/>
    </location>
</feature>
<feature type="coiled-coil region" evidence="1">
    <location>
        <begin position="444"/>
        <end position="480"/>
    </location>
</feature>
<feature type="coiled-coil region" evidence="1">
    <location>
        <begin position="509"/>
        <end position="603"/>
    </location>
</feature>
<feature type="coiled-coil region" evidence="1">
    <location>
        <begin position="835"/>
        <end position="923"/>
    </location>
</feature>
<feature type="coiled-coil region" evidence="1">
    <location>
        <begin position="977"/>
        <end position="1115"/>
    </location>
</feature>
<feature type="coiled-coil region" evidence="1">
    <location>
        <begin position="1209"/>
        <end position="1266"/>
    </location>
</feature>
<feature type="binding site" evidence="1">
    <location>
        <begin position="34"/>
        <end position="41"/>
    </location>
    <ligand>
        <name>ATP</name>
        <dbReference type="ChEBI" id="CHEBI:30616"/>
    </ligand>
</feature>
<accession>C4ZQ50</accession>
<reference key="1">
    <citation type="journal article" date="2009" name="J. Bacteriol.">
        <title>Genomic sequencing reveals regulatory mutations and recombinational events in the widely used MC4100 lineage of Escherichia coli K-12.</title>
        <authorList>
            <person name="Ferenci T."/>
            <person name="Zhou Z."/>
            <person name="Betteridge T."/>
            <person name="Ren Y."/>
            <person name="Liu Y."/>
            <person name="Feng L."/>
            <person name="Reeves P.R."/>
            <person name="Wang L."/>
        </authorList>
    </citation>
    <scope>NUCLEOTIDE SEQUENCE [LARGE SCALE GENOMIC DNA]</scope>
    <source>
        <strain>K12 / MC4100 / BW2952</strain>
    </source>
</reference>
<keyword id="KW-0067">ATP-binding</keyword>
<keyword id="KW-0131">Cell cycle</keyword>
<keyword id="KW-0132">Cell division</keyword>
<keyword id="KW-0159">Chromosome partition</keyword>
<keyword id="KW-0175">Coiled coil</keyword>
<keyword id="KW-0963">Cytoplasm</keyword>
<keyword id="KW-0226">DNA condensation</keyword>
<keyword id="KW-0238">DNA-binding</keyword>
<keyword id="KW-0547">Nucleotide-binding</keyword>
<sequence>MIERGKFRSLTLINWNGFFARTFDLDELVTTLSGGNGAGKSTTMAAFVTALIPDLTLLHFRNTTEAGATSGSRDKGLHGKLKAGVCYSMLDTINSRHQRVVVGVRLQQVAGRDRKVDIKPFAIQGLPMSVQPTQLVTETLNERQARVLPLNELKDKLEAMEGVQFKQFNSITDYHSLMFDLGIIARRLRSASDRSKFYRLIEASLYGGISSAITRSLRDYLLPENSGVRKAFQDMEAALRENRMTLEAIRVTQSDRDLFKHLISEATNYVAADYMRHANERRVHLDKALEFRRELHTSRQQLAAEQYKHVDMARELAEHNGAEGDLEADYQAASDHLNLVQTALRQQEKIERYEADLDELQIRLEEQNEVVAEAIERQQENEARAEAAELEVDELKSQLADYQQALDVQQTRAIQYNQAIAALNRAKELCHLPDLTADCAAEWLETFQAKELEATEKMLSLEQKMSMAQTAHSQFEQAYQLVVAINGPLARNEAWDVARELLREGVDQRHLAEQVQPLRMRLSELEQRLREQQEAERLLADFCKRQGKNFDIDELEALHQELEARIASLSDSVSNAREERMALRQEQEQLQSRIQSLMQRAPVWLAAQNSLNQLSEQCGEEFTSSQDVTEYLQQLLEREREAIVERDEVGARKNAVDEEIERLSQPGGSEDQRLNALAERFGGVLLSEIYDDVSLEDAPYFSALYGPSRHAIVVPDLSQVTEHLEGLTDCPEDLYLIEGDPQSFDDSVFSVDELEKAVVVKIADRQWRYSRFPEVPLFGRAARESRIESLHAEREVLSERFATLSFDVQKTQRLHQAFSRFIGSHLAVAFESDPEAEIRQLNSRRVELERALSNHENDNQQQRIQFEQAKEGVTALNRILPRLNLLADDSLADRVDEIRERLDEAQEAARFVQQFGNQLAKLEPIVSVLQSDPEQFEQLKEDYAYSQQMQRDARQQAFALTEVVQRRAHFSYSDSAEMLSGNSDLNEKLRERLEQAEAERTRAREALRGHAAQLSQYNQVLASLKSSYDTKKELLNDLQRELQDIGVRADSGAEERARIRRDELHAQLSNNRSRRNQLEKALTFCEAEMDNLTRKLRKLERDYFEMREQVVTAKAGWCAVMRMVKDNGVERRLHRRELAYLSADDLRSMSDKALGALRLAVADNEHLRDVLRMSEDPKRPERKIQFFVAVYQHLRERIRQDIIRTDDPVEAIEQMEIELSRLTEELTSREQKLAISSRSVANIIRKTIQREQNRIRMLNQGLQNVSFGQVNSVRLNVNVRETHAMLLDVLSEQHEQHQDLFNSNRLTFSEALAKLYQRLNPQIDMGQRTPQTIGEELLDYRNYLEMEVEVNRGSDGWLRAESGALSTGEAIGTGMSILVMVVQSWEDESRRLRGKDISPCRLLFLDEAARLDARSIATLFELCERLQMQLIIAAPENISPEKGTTYKLVRKVFQNTEHVHVVGLRGFAPQLPETLPGTDEAPSQAS</sequence>
<protein>
    <recommendedName>
        <fullName evidence="1">Chromosome partition protein MukB</fullName>
    </recommendedName>
    <alternativeName>
        <fullName evidence="1">Structural maintenance of chromosome-related protein</fullName>
    </alternativeName>
</protein>
<organism>
    <name type="scientific">Escherichia coli (strain K12 / MC4100 / BW2952)</name>
    <dbReference type="NCBI Taxonomy" id="595496"/>
    <lineage>
        <taxon>Bacteria</taxon>
        <taxon>Pseudomonadati</taxon>
        <taxon>Pseudomonadota</taxon>
        <taxon>Gammaproteobacteria</taxon>
        <taxon>Enterobacterales</taxon>
        <taxon>Enterobacteriaceae</taxon>
        <taxon>Escherichia</taxon>
    </lineage>
</organism>
<gene>
    <name evidence="1" type="primary">mukB</name>
    <name type="ordered locus">BWG_0776</name>
</gene>
<name>MUKB_ECOBW</name>
<proteinExistence type="inferred from homology"/>
<dbReference type="EMBL" id="CP001396">
    <property type="protein sequence ID" value="ACR63174.1"/>
    <property type="molecule type" value="Genomic_DNA"/>
</dbReference>
<dbReference type="RefSeq" id="WP_000572698.1">
    <property type="nucleotide sequence ID" value="NC_012759.1"/>
</dbReference>
<dbReference type="SMR" id="C4ZQ50"/>
<dbReference type="KEGG" id="ebw:BWG_0776"/>
<dbReference type="HOGENOM" id="CLU_004430_0_0_6"/>
<dbReference type="GO" id="GO:0005737">
    <property type="term" value="C:cytoplasm"/>
    <property type="evidence" value="ECO:0007669"/>
    <property type="project" value="UniProtKB-UniRule"/>
</dbReference>
<dbReference type="GO" id="GO:0009295">
    <property type="term" value="C:nucleoid"/>
    <property type="evidence" value="ECO:0007669"/>
    <property type="project" value="UniProtKB-SubCell"/>
</dbReference>
<dbReference type="GO" id="GO:0005524">
    <property type="term" value="F:ATP binding"/>
    <property type="evidence" value="ECO:0007669"/>
    <property type="project" value="UniProtKB-UniRule"/>
</dbReference>
<dbReference type="GO" id="GO:0003677">
    <property type="term" value="F:DNA binding"/>
    <property type="evidence" value="ECO:0007669"/>
    <property type="project" value="UniProtKB-UniRule"/>
</dbReference>
<dbReference type="GO" id="GO:0051301">
    <property type="term" value="P:cell division"/>
    <property type="evidence" value="ECO:0007669"/>
    <property type="project" value="UniProtKB-KW"/>
</dbReference>
<dbReference type="GO" id="GO:0030261">
    <property type="term" value="P:chromosome condensation"/>
    <property type="evidence" value="ECO:0007669"/>
    <property type="project" value="UniProtKB-KW"/>
</dbReference>
<dbReference type="GO" id="GO:0007059">
    <property type="term" value="P:chromosome segregation"/>
    <property type="evidence" value="ECO:0007669"/>
    <property type="project" value="UniProtKB-UniRule"/>
</dbReference>
<dbReference type="GO" id="GO:0006260">
    <property type="term" value="P:DNA replication"/>
    <property type="evidence" value="ECO:0007669"/>
    <property type="project" value="UniProtKB-UniRule"/>
</dbReference>
<dbReference type="FunFam" id="1.20.58.850:FF:000001">
    <property type="entry name" value="Chromosome partition protein MukB"/>
    <property type="match status" value="1"/>
</dbReference>
<dbReference type="FunFam" id="3.30.70.3500:FF:000001">
    <property type="entry name" value="Chromosome partition protein MukB"/>
    <property type="match status" value="1"/>
</dbReference>
<dbReference type="FunFam" id="3.40.1140.10:FF:000001">
    <property type="entry name" value="Chromosome partition protein MukB"/>
    <property type="match status" value="1"/>
</dbReference>
<dbReference type="FunFam" id="3.40.1140.10:FF:000002">
    <property type="entry name" value="Chromosome partition protein MukB"/>
    <property type="match status" value="1"/>
</dbReference>
<dbReference type="Gene3D" id="1.20.58.850">
    <property type="match status" value="1"/>
</dbReference>
<dbReference type="Gene3D" id="3.40.1140.10">
    <property type="match status" value="2"/>
</dbReference>
<dbReference type="Gene3D" id="1.20.5.420">
    <property type="entry name" value="Immunoglobulin FC, subunit C"/>
    <property type="match status" value="1"/>
</dbReference>
<dbReference type="Gene3D" id="3.30.70.3500">
    <property type="entry name" value="MukB, hinge domain"/>
    <property type="match status" value="1"/>
</dbReference>
<dbReference type="HAMAP" id="MF_01800">
    <property type="entry name" value="MukB"/>
    <property type="match status" value="1"/>
</dbReference>
<dbReference type="InterPro" id="IPR012090">
    <property type="entry name" value="MukB"/>
</dbReference>
<dbReference type="InterPro" id="IPR050308">
    <property type="entry name" value="MukB/SMC"/>
</dbReference>
<dbReference type="InterPro" id="IPR032520">
    <property type="entry name" value="MukB_hinge"/>
</dbReference>
<dbReference type="InterPro" id="IPR042501">
    <property type="entry name" value="MukB_hinge_sf"/>
</dbReference>
<dbReference type="InterPro" id="IPR007406">
    <property type="entry name" value="MukB_N_dom"/>
</dbReference>
<dbReference type="InterPro" id="IPR027417">
    <property type="entry name" value="P-loop_NTPase"/>
</dbReference>
<dbReference type="NCBIfam" id="NF003422">
    <property type="entry name" value="PRK04863.1"/>
    <property type="match status" value="1"/>
</dbReference>
<dbReference type="PANTHER" id="PTHR42963">
    <property type="entry name" value="CHROMOSOME PARTITION PROTEIN MUKB"/>
    <property type="match status" value="1"/>
</dbReference>
<dbReference type="PANTHER" id="PTHR42963:SF1">
    <property type="entry name" value="DUF4476 DOMAIN-CONTAINING PROTEIN"/>
    <property type="match status" value="1"/>
</dbReference>
<dbReference type="Pfam" id="PF04310">
    <property type="entry name" value="MukB"/>
    <property type="match status" value="1"/>
</dbReference>
<dbReference type="Pfam" id="PF16330">
    <property type="entry name" value="MukB_hinge"/>
    <property type="match status" value="1"/>
</dbReference>
<dbReference type="Pfam" id="PF13558">
    <property type="entry name" value="SbcC_Walker_B"/>
    <property type="match status" value="1"/>
</dbReference>
<dbReference type="PIRSF" id="PIRSF005246">
    <property type="entry name" value="MukB"/>
    <property type="match status" value="1"/>
</dbReference>
<dbReference type="SUPFAM" id="SSF52540">
    <property type="entry name" value="P-loop containing nucleoside triphosphate hydrolases"/>
    <property type="match status" value="2"/>
</dbReference>
<comment type="function">
    <text evidence="1">Plays a central role in chromosome condensation, segregation and cell cycle progression. Functions as a homodimer, which is essential for chromosome partition. Involved in negative DNA supercoiling in vivo, and by this means organize and compact chromosomes. May achieve or facilitate chromosome segregation by condensation DNA from both sides of a centrally located replisome during cell division.</text>
</comment>
<comment type="subunit">
    <text evidence="1">Homodimerization via its hinge domain. Binds to DNA via its C-terminal region. Interacts, and probably forms a ternary complex, with MukE and MukF via its C-terminal region. The complex formation is stimulated by calcium or magnesium. Interacts with tubulin-related protein FtsZ.</text>
</comment>
<comment type="subcellular location">
    <subcellularLocation>
        <location evidence="1">Cytoplasm</location>
        <location evidence="1">Nucleoid</location>
    </subcellularLocation>
    <text evidence="1">Restricted to the nucleoid region.</text>
</comment>
<comment type="domain">
    <text evidence="1">The hinge domain, which separates the large intramolecular coiled coil regions, allows the homodimerization, forming a V-shaped homodimer.</text>
</comment>
<comment type="similarity">
    <text evidence="1">Belongs to the SMC family. MukB subfamily.</text>
</comment>
<evidence type="ECO:0000255" key="1">
    <source>
        <dbReference type="HAMAP-Rule" id="MF_01800"/>
    </source>
</evidence>